<evidence type="ECO:0000255" key="1">
    <source>
        <dbReference type="HAMAP-Rule" id="MF_01854"/>
    </source>
</evidence>
<keyword id="KW-0119">Carbohydrate metabolism</keyword>
<keyword id="KW-0378">Hydrolase</keyword>
<keyword id="KW-0464">Manganese</keyword>
<reference key="1">
    <citation type="journal article" date="2005" name="J. Bacteriol.">
        <title>Whole-genome sequencing of Staphylococcus haemolyticus uncovers the extreme plasticity of its genome and the evolution of human-colonizing staphylococcal species.</title>
        <authorList>
            <person name="Takeuchi F."/>
            <person name="Watanabe S."/>
            <person name="Baba T."/>
            <person name="Yuzawa H."/>
            <person name="Ito T."/>
            <person name="Morimoto Y."/>
            <person name="Kuroda M."/>
            <person name="Cui L."/>
            <person name="Takahashi M."/>
            <person name="Ankai A."/>
            <person name="Baba S."/>
            <person name="Fukui S."/>
            <person name="Lee J.C."/>
            <person name="Hiramatsu K."/>
        </authorList>
    </citation>
    <scope>NUCLEOTIDE SEQUENCE [LARGE SCALE GENOMIC DNA]</scope>
    <source>
        <strain>JCSC1435</strain>
    </source>
</reference>
<organism>
    <name type="scientific">Staphylococcus haemolyticus (strain JCSC1435)</name>
    <dbReference type="NCBI Taxonomy" id="279808"/>
    <lineage>
        <taxon>Bacteria</taxon>
        <taxon>Bacillati</taxon>
        <taxon>Bacillota</taxon>
        <taxon>Bacilli</taxon>
        <taxon>Bacillales</taxon>
        <taxon>Staphylococcaceae</taxon>
        <taxon>Staphylococcus</taxon>
    </lineage>
</organism>
<comment type="catalytic activity">
    <reaction evidence="1">
        <text>beta-D-fructose 1,6-bisphosphate + H2O = beta-D-fructose 6-phosphate + phosphate</text>
        <dbReference type="Rhea" id="RHEA:11064"/>
        <dbReference type="ChEBI" id="CHEBI:15377"/>
        <dbReference type="ChEBI" id="CHEBI:32966"/>
        <dbReference type="ChEBI" id="CHEBI:43474"/>
        <dbReference type="ChEBI" id="CHEBI:57634"/>
        <dbReference type="EC" id="3.1.3.11"/>
    </reaction>
</comment>
<comment type="cofactor">
    <cofactor evidence="1">
        <name>Mn(2+)</name>
        <dbReference type="ChEBI" id="CHEBI:29035"/>
    </cofactor>
</comment>
<comment type="pathway">
    <text evidence="1">Carbohydrate biosynthesis; gluconeogenesis.</text>
</comment>
<comment type="similarity">
    <text evidence="1">Belongs to the FBPase class 3 family.</text>
</comment>
<name>F16PC_STAHJ</name>
<gene>
    <name evidence="1" type="primary">fbp</name>
    <name type="ordered locus">SH0559</name>
</gene>
<protein>
    <recommendedName>
        <fullName evidence="1">Fructose-1,6-bisphosphatase class 3</fullName>
        <shortName evidence="1">FBPase class 3</shortName>
        <ecNumber evidence="1">3.1.3.11</ecNumber>
    </recommendedName>
    <alternativeName>
        <fullName evidence="1">D-fructose-1,6-bisphosphate 1-phosphohydrolase class 3</fullName>
    </alternativeName>
</protein>
<dbReference type="EC" id="3.1.3.11" evidence="1"/>
<dbReference type="EMBL" id="AP006716">
    <property type="protein sequence ID" value="BAE03868.1"/>
    <property type="molecule type" value="Genomic_DNA"/>
</dbReference>
<dbReference type="RefSeq" id="WP_011274884.1">
    <property type="nucleotide sequence ID" value="NC_007168.1"/>
</dbReference>
<dbReference type="KEGG" id="sha:SH0559"/>
<dbReference type="eggNOG" id="COG3855">
    <property type="taxonomic scope" value="Bacteria"/>
</dbReference>
<dbReference type="HOGENOM" id="CLU_028392_2_0_9"/>
<dbReference type="OrthoDB" id="9779903at2"/>
<dbReference type="UniPathway" id="UPA00138"/>
<dbReference type="Proteomes" id="UP000000543">
    <property type="component" value="Chromosome"/>
</dbReference>
<dbReference type="GO" id="GO:0042132">
    <property type="term" value="F:fructose 1,6-bisphosphate 1-phosphatase activity"/>
    <property type="evidence" value="ECO:0007669"/>
    <property type="project" value="UniProtKB-UniRule"/>
</dbReference>
<dbReference type="GO" id="GO:0006094">
    <property type="term" value="P:gluconeogenesis"/>
    <property type="evidence" value="ECO:0007669"/>
    <property type="project" value="UniProtKB-UniRule"/>
</dbReference>
<dbReference type="Gene3D" id="3.60.21.10">
    <property type="match status" value="1"/>
</dbReference>
<dbReference type="HAMAP" id="MF_01854">
    <property type="entry name" value="FBPase_class3"/>
    <property type="match status" value="1"/>
</dbReference>
<dbReference type="InterPro" id="IPR009164">
    <property type="entry name" value="FBPtase_class3"/>
</dbReference>
<dbReference type="InterPro" id="IPR029052">
    <property type="entry name" value="Metallo-depent_PP-like"/>
</dbReference>
<dbReference type="Pfam" id="PF06874">
    <property type="entry name" value="FBPase_2"/>
    <property type="match status" value="1"/>
</dbReference>
<dbReference type="PIRSF" id="PIRSF000906">
    <property type="entry name" value="FBPtase_Bacill"/>
    <property type="match status" value="1"/>
</dbReference>
<dbReference type="SUPFAM" id="SSF56300">
    <property type="entry name" value="Metallo-dependent phosphatases"/>
    <property type="match status" value="2"/>
</dbReference>
<sequence>MTQTTESELREKYLDLLSQQFDSPEKLATEIVNLESILELPKGTEHFVSDLHGEYESFQHVLRNGSGNVRSKINDLYAKTLSQKEIDDLAALVYYPEEKLKLVKNNFDSKGKLNVWYITTIEQLIDLITYCSSKYTRSKLRKALPKEYTYIVEELLYKNNEFNNKKSYYETLVNQIIELEQSDDLIIGLSYSIQRLVVDHLHVVGDIYDRGPQPDKIMDTLINYHSVDIQWGNHDVLWIGAYAGSKACLANLLRICARYDNLDIIEDAYGINLRPLLTLAEEHYNGENPAFKPKKRPDKPVGLSKLEESQITKIHQAIAMIQFKLEMPIIKRRPTFEMEDRLVLEKVNYDTNEITIYGKTYPLKDTCFSTVDPQDPGKLLPEEEEVMNKLLLSFQQSEKLKRHMSFLMKKGKLYLPYNGNLLIHGCIPVDENGEMESFEIEGEQHKGRDLLDVFERHVRYAYDYKEITDDLSTDLVWYLWTGKYSSLFGKRAMTTFERYFIEDKASHKEPKNPYYYLREDVDMIRKMLKDFGLNPDEGRIINGHTPVKEIDGEDPIKADGKMLVIDGGFSKAYQKTTGIAGYTLLYNSFGMQLVAHQHFDSRDKVLSDGADELSVRRVVDEELQRKKIRDTNDGKVLQEQIRILKLLMHDRYLN</sequence>
<feature type="chain" id="PRO_0000359998" description="Fructose-1,6-bisphosphatase class 3">
    <location>
        <begin position="1"/>
        <end position="654"/>
    </location>
</feature>
<accession>Q4L907</accession>
<proteinExistence type="inferred from homology"/>